<organism>
    <name type="scientific">Synechococcus sp. (strain CC9605)</name>
    <dbReference type="NCBI Taxonomy" id="110662"/>
    <lineage>
        <taxon>Bacteria</taxon>
        <taxon>Bacillati</taxon>
        <taxon>Cyanobacteriota</taxon>
        <taxon>Cyanophyceae</taxon>
        <taxon>Synechococcales</taxon>
        <taxon>Synechococcaceae</taxon>
        <taxon>Synechococcus</taxon>
    </lineage>
</organism>
<proteinExistence type="inferred from homology"/>
<evidence type="ECO:0000255" key="1">
    <source>
        <dbReference type="HAMAP-Rule" id="MF_00201"/>
    </source>
</evidence>
<keyword id="KW-0227">DNA damage</keyword>
<keyword id="KW-0233">DNA recombination</keyword>
<keyword id="KW-0234">DNA repair</keyword>
<comment type="function">
    <text evidence="1">Involved in DNA repair and RecF pathway recombination.</text>
</comment>
<comment type="similarity">
    <text evidence="1">Belongs to the RecO family.</text>
</comment>
<gene>
    <name evidence="1" type="primary">recO</name>
    <name type="ordered locus">Syncc9605_2015</name>
</gene>
<accession>Q3AI26</accession>
<reference key="1">
    <citation type="submission" date="2005-07" db="EMBL/GenBank/DDBJ databases">
        <title>Complete sequence of Synechococcus sp. CC9605.</title>
        <authorList>
            <consortium name="US DOE Joint Genome Institute"/>
            <person name="Copeland A."/>
            <person name="Lucas S."/>
            <person name="Lapidus A."/>
            <person name="Barry K."/>
            <person name="Detter J.C."/>
            <person name="Glavina T."/>
            <person name="Hammon N."/>
            <person name="Israni S."/>
            <person name="Pitluck S."/>
            <person name="Schmutz J."/>
            <person name="Martinez M."/>
            <person name="Larimer F."/>
            <person name="Land M."/>
            <person name="Kyrpides N."/>
            <person name="Ivanova N."/>
            <person name="Richardson P."/>
        </authorList>
    </citation>
    <scope>NUCLEOTIDE SEQUENCE [LARGE SCALE GENOMIC DNA]</scope>
    <source>
        <strain>CC9605</strain>
    </source>
</reference>
<protein>
    <recommendedName>
        <fullName evidence="1">DNA repair protein RecO</fullName>
    </recommendedName>
    <alternativeName>
        <fullName evidence="1">Recombination protein O</fullName>
    </alternativeName>
</protein>
<name>RECO_SYNSC</name>
<sequence>MAERRLTGLALKVGPLGEHDRLLSLLSNAEGVSRFAVPGARRPRSSLAAAAPLTLLELQVGGRSGLARVRQLRVLRSFSGLGQQLETLAAAQALCDLCIQLAAEDPVEGLLDTMQLHLERLEEHRADPELVLAGTVQACIHLLTLGGYGLPLQTCCITGDPLEPPLGQWDWRCSLLAQDGFAIDEQPGAAIQLNPSELALLQRLTRAELPRRRDGELMGPPAVWRRLLRVVEIWSRTHLNRPSKALAMLRETLLAGA</sequence>
<dbReference type="EMBL" id="CP000110">
    <property type="protein sequence ID" value="ABB35756.1"/>
    <property type="molecule type" value="Genomic_DNA"/>
</dbReference>
<dbReference type="RefSeq" id="WP_011364964.1">
    <property type="nucleotide sequence ID" value="NC_007516.1"/>
</dbReference>
<dbReference type="SMR" id="Q3AI26"/>
<dbReference type="STRING" id="110662.Syncc9605_2015"/>
<dbReference type="KEGG" id="syd:Syncc9605_2015"/>
<dbReference type="eggNOG" id="COG1381">
    <property type="taxonomic scope" value="Bacteria"/>
</dbReference>
<dbReference type="HOGENOM" id="CLU_066632_0_0_3"/>
<dbReference type="OrthoDB" id="9797083at2"/>
<dbReference type="GO" id="GO:0043590">
    <property type="term" value="C:bacterial nucleoid"/>
    <property type="evidence" value="ECO:0007669"/>
    <property type="project" value="TreeGrafter"/>
</dbReference>
<dbReference type="GO" id="GO:0006310">
    <property type="term" value="P:DNA recombination"/>
    <property type="evidence" value="ECO:0007669"/>
    <property type="project" value="UniProtKB-UniRule"/>
</dbReference>
<dbReference type="GO" id="GO:0006302">
    <property type="term" value="P:double-strand break repair"/>
    <property type="evidence" value="ECO:0007669"/>
    <property type="project" value="TreeGrafter"/>
</dbReference>
<dbReference type="Gene3D" id="2.40.50.140">
    <property type="entry name" value="Nucleic acid-binding proteins"/>
    <property type="match status" value="1"/>
</dbReference>
<dbReference type="Gene3D" id="1.20.1440.120">
    <property type="entry name" value="Recombination protein O, C-terminal domain"/>
    <property type="match status" value="1"/>
</dbReference>
<dbReference type="HAMAP" id="MF_00201">
    <property type="entry name" value="RecO"/>
    <property type="match status" value="1"/>
</dbReference>
<dbReference type="InterPro" id="IPR037278">
    <property type="entry name" value="ARFGAP/RecO"/>
</dbReference>
<dbReference type="InterPro" id="IPR022572">
    <property type="entry name" value="DNA_rep/recomb_RecO_N"/>
</dbReference>
<dbReference type="InterPro" id="IPR012340">
    <property type="entry name" value="NA-bd_OB-fold"/>
</dbReference>
<dbReference type="InterPro" id="IPR003717">
    <property type="entry name" value="RecO"/>
</dbReference>
<dbReference type="InterPro" id="IPR042242">
    <property type="entry name" value="RecO_C"/>
</dbReference>
<dbReference type="NCBIfam" id="TIGR00613">
    <property type="entry name" value="reco"/>
    <property type="match status" value="1"/>
</dbReference>
<dbReference type="PANTHER" id="PTHR33991">
    <property type="entry name" value="DNA REPAIR PROTEIN RECO"/>
    <property type="match status" value="1"/>
</dbReference>
<dbReference type="PANTHER" id="PTHR33991:SF1">
    <property type="entry name" value="DNA REPAIR PROTEIN RECO"/>
    <property type="match status" value="1"/>
</dbReference>
<dbReference type="Pfam" id="PF02565">
    <property type="entry name" value="RecO_C"/>
    <property type="match status" value="1"/>
</dbReference>
<dbReference type="Pfam" id="PF11967">
    <property type="entry name" value="RecO_N"/>
    <property type="match status" value="1"/>
</dbReference>
<dbReference type="SUPFAM" id="SSF57863">
    <property type="entry name" value="ArfGap/RecO-like zinc finger"/>
    <property type="match status" value="1"/>
</dbReference>
<dbReference type="SUPFAM" id="SSF50249">
    <property type="entry name" value="Nucleic acid-binding proteins"/>
    <property type="match status" value="1"/>
</dbReference>
<feature type="chain" id="PRO_1000099422" description="DNA repair protein RecO">
    <location>
        <begin position="1"/>
        <end position="257"/>
    </location>
</feature>